<organism>
    <name type="scientific">Penicillium shearii</name>
    <name type="common">Eupenicillium shearii</name>
    <dbReference type="NCBI Taxonomy" id="904690"/>
    <lineage>
        <taxon>Eukaryota</taxon>
        <taxon>Fungi</taxon>
        <taxon>Dikarya</taxon>
        <taxon>Ascomycota</taxon>
        <taxon>Pezizomycotina</taxon>
        <taxon>Eurotiomycetes</taxon>
        <taxon>Eurotiomycetidae</taxon>
        <taxon>Eurotiales</taxon>
        <taxon>Aspergillaceae</taxon>
        <taxon>Penicillium</taxon>
    </lineage>
</organism>
<evidence type="ECO:0000255" key="1"/>
<evidence type="ECO:0000255" key="2">
    <source>
        <dbReference type="PROSITE-ProRule" id="PRU00258"/>
    </source>
</evidence>
<evidence type="ECO:0000255" key="3">
    <source>
        <dbReference type="PROSITE-ProRule" id="PRU01348"/>
    </source>
</evidence>
<evidence type="ECO:0000255" key="4">
    <source>
        <dbReference type="PROSITE-ProRule" id="PRU01363"/>
    </source>
</evidence>
<evidence type="ECO:0000255" key="5">
    <source>
        <dbReference type="PROSITE-ProRule" id="PRU10022"/>
    </source>
</evidence>
<evidence type="ECO:0000269" key="6">
    <source>
    </source>
</evidence>
<evidence type="ECO:0000303" key="7">
    <source>
    </source>
</evidence>
<evidence type="ECO:0000305" key="8">
    <source>
    </source>
</evidence>
<accession>A0A8D5M692</accession>
<comment type="function">
    <text evidence="6">Non-reducing polyketide synthase; part of the cluster that mediates the biosynthesis of shearones, diterpenoid pyrones (DPs) which are structurally diverse meroterpenoids consisting of a diterpene linked by a pyrone, and which may exhibit a range of bioactivities (PubMed:35057611). Whitin the pathway, esdpA takes part to the biosynthesis of the molecular scaffold via the production of the alpha-pyrone from one molecule of acetyl-CoA, two molecules of malonyl-CoA and one molecule of S-adenosyl-L-methionine (SAM) (PubMed:35057611). The molecular scaffold is commonly biosynthesized by a series of enzymes including the non-reducing polyketide synthase (NR-PKS) esdpA that generates an alpha-pyrone; the prenyltransferase esdpC that attaches a geranylgeranyl pyrophosphate (GGPP) produced by the GGPP synthase (GGPPS) esdpD onto the pyrone unit; the FAD-dependent monooxygenase esdpE that converts an olefin on the diterpene unit into an epoxide; and the terpene cyclase esdpB that catalyzes the cyclization reactions to give the molecular backbone shearone A (PubMed:35057611). In the modification steps, esdpF oxidizes the hydroxy group to a ketone at C-3 and esdpG then attaches hydroxy groups at both C-11 and C-12. After that, esdpI hydroxylates at C-20 and esdpH hydroxylates at C-6'. The ether bridge is generated by nucleophilic attack of the hydroxy group at C-20 to the carbonyl carbon at C-3. EsdpH can also functions prior to esdpI. The different combinations of these modification enzymes lead to the production of diverse shearone derivatives, shearone I being the end product of the pathway (PubMed:35057611). The alpha-ketoglutarate-dependent dioxygenase esdpJ seems not to be involved in this pathway (PubMed:35057611).</text>
</comment>
<comment type="cofactor">
    <cofactor evidence="2">
        <name>pantetheine 4'-phosphate</name>
        <dbReference type="ChEBI" id="CHEBI:47942"/>
    </cofactor>
</comment>
<comment type="pathway">
    <text evidence="6">Secondary metabolite biosynthesis; terpenoid biosynthesis.</text>
</comment>
<comment type="domain">
    <text evidence="8">Multidomain protein; including a starter unit:ACP transacylase (SAT) that selects the starter unit; a ketosynthase (KS) that catalyzes repeated decarboxylative condensation to elongate the polyketide backbone; a malonyl-CoA:ACP transacylase (MAT) that selects and transfers the extender unit malonyl-CoA; a product template (PT) domain that controls the immediate cyclization regioselectivity of the reactive polyketide backbone; a methyltransferase (CMeT) domain; and an acyl-carrier proteins (ACP) that serves as the tether of the growing and completed polyketide via its phosphopantetheinyl arm.</text>
</comment>
<comment type="biotechnology">
    <text evidence="6">Shearone derivatives produced by this cluster are interesting candidates for Alzheimer's disease (AD) therapy since they moderately inhibit aggregation of amyloid beta 42 (Abeta42).</text>
</comment>
<protein>
    <recommendedName>
        <fullName evidence="7">Non-reducing polyketide synthase esdpA</fullName>
        <shortName evidence="7">NR-PKS esdpA</shortName>
        <ecNumber evidence="6">2.3.1.-</ecNumber>
    </recommendedName>
    <alternativeName>
        <fullName evidence="7">Shearone I biosynthesis cluster protein A</fullName>
    </alternativeName>
</protein>
<name>ESDPA_PENSH</name>
<keyword id="KW-0012">Acyltransferase</keyword>
<keyword id="KW-0489">Methyltransferase</keyword>
<keyword id="KW-0511">Multifunctional enzyme</keyword>
<keyword id="KW-0596">Phosphopantetheine</keyword>
<keyword id="KW-0597">Phosphoprotein</keyword>
<keyword id="KW-0808">Transferase</keyword>
<feature type="chain" id="PRO_0000461043" description="Non-reducing polyketide synthase esdpA">
    <location>
        <begin position="1"/>
        <end position="2193"/>
    </location>
</feature>
<feature type="domain" description="Starter acyltransferase (SAT)" evidence="1 8">
    <location>
        <begin position="90"/>
        <end position="252"/>
    </location>
</feature>
<feature type="domain" description="Ketosynthase family 3 (KS3)" evidence="3 8">
    <location>
        <begin position="381"/>
        <end position="797"/>
    </location>
</feature>
<feature type="domain" description="Malonyl-CoA:ACP transacylase (MAT)" evidence="1 8">
    <location>
        <begin position="906"/>
        <end position="1158"/>
    </location>
</feature>
<feature type="domain" description="PKS/mFAS DH" evidence="4 8">
    <location>
        <begin position="1265"/>
        <end position="1569"/>
    </location>
</feature>
<feature type="domain" description="Carrier" evidence="2 8">
    <location>
        <begin position="1723"/>
        <end position="1799"/>
    </location>
</feature>
<feature type="region of interest" description="N-terminal hotdog fold" evidence="4">
    <location>
        <begin position="1265"/>
        <end position="1392"/>
    </location>
</feature>
<feature type="region of interest" description="C-terminal hotdog fold" evidence="4">
    <location>
        <begin position="1419"/>
        <end position="1569"/>
    </location>
</feature>
<feature type="region of interest" description="Methyltransferase (CMeT) domain" evidence="1 8">
    <location>
        <begin position="1944"/>
        <end position="2177"/>
    </location>
</feature>
<feature type="active site" description="For beta-ketoacyl synthase activity" evidence="3">
    <location>
        <position position="546"/>
    </location>
</feature>
<feature type="active site" description="For beta-ketoacyl synthase activity" evidence="3">
    <location>
        <position position="682"/>
    </location>
</feature>
<feature type="active site" description="For beta-ketoacyl synthase activity" evidence="3">
    <location>
        <position position="720"/>
    </location>
</feature>
<feature type="active site" description="For acyl/malonyl transferase activity" evidence="5">
    <location>
        <position position="992"/>
    </location>
</feature>
<feature type="active site" description="Proton donor; for dehydratase activity" evidence="4">
    <location>
        <position position="1479"/>
    </location>
</feature>
<feature type="modified residue" description="O-(pantetheine 4'-phosphoryl)serine" evidence="2">
    <location>
        <position position="1759"/>
    </location>
</feature>
<reference key="1">
    <citation type="journal article" date="2022" name="J. Nat. Prod.">
        <title>Synthetic biology-based discovery of diterpenoid pyrones from the genome of Eupenicillium shearii.</title>
        <authorList>
            <person name="Morishita Y."/>
            <person name="Tsukada K."/>
            <person name="Murakami K."/>
            <person name="Irie K."/>
            <person name="Asai T."/>
        </authorList>
    </citation>
    <scope>NUCLEOTIDE SEQUENCE [GENOMIC DNA]</scope>
    <scope>FUNCTION</scope>
    <scope>CATALYTIC ACTIVITY</scope>
    <scope>PATHWAY</scope>
    <scope>BIOTECHNOLOGY</scope>
    <source>
        <strain>IFM 42152</strain>
    </source>
</reference>
<dbReference type="EC" id="2.3.1.-" evidence="6"/>
<dbReference type="EMBL" id="LC600199">
    <property type="protein sequence ID" value="BCP96883.1"/>
    <property type="molecule type" value="Genomic_DNA"/>
</dbReference>
<dbReference type="SMR" id="A0A8D5M692"/>
<dbReference type="UniPathway" id="UPA00213"/>
<dbReference type="GO" id="GO:0004315">
    <property type="term" value="F:3-oxoacyl-[acyl-carrier-protein] synthase activity"/>
    <property type="evidence" value="ECO:0007669"/>
    <property type="project" value="InterPro"/>
</dbReference>
<dbReference type="GO" id="GO:0004312">
    <property type="term" value="F:fatty acid synthase activity"/>
    <property type="evidence" value="ECO:0007669"/>
    <property type="project" value="TreeGrafter"/>
</dbReference>
<dbReference type="GO" id="GO:0008168">
    <property type="term" value="F:methyltransferase activity"/>
    <property type="evidence" value="ECO:0007669"/>
    <property type="project" value="UniProtKB-KW"/>
</dbReference>
<dbReference type="GO" id="GO:0006633">
    <property type="term" value="P:fatty acid biosynthetic process"/>
    <property type="evidence" value="ECO:0007669"/>
    <property type="project" value="InterPro"/>
</dbReference>
<dbReference type="GO" id="GO:0032259">
    <property type="term" value="P:methylation"/>
    <property type="evidence" value="ECO:0007669"/>
    <property type="project" value="UniProtKB-KW"/>
</dbReference>
<dbReference type="GO" id="GO:0044550">
    <property type="term" value="P:secondary metabolite biosynthetic process"/>
    <property type="evidence" value="ECO:0007669"/>
    <property type="project" value="UniProtKB-ARBA"/>
</dbReference>
<dbReference type="CDD" id="cd02440">
    <property type="entry name" value="AdoMet_MTases"/>
    <property type="match status" value="1"/>
</dbReference>
<dbReference type="CDD" id="cd00833">
    <property type="entry name" value="PKS"/>
    <property type="match status" value="1"/>
</dbReference>
<dbReference type="Gene3D" id="3.30.70.3290">
    <property type="match status" value="1"/>
</dbReference>
<dbReference type="Gene3D" id="3.40.47.10">
    <property type="match status" value="1"/>
</dbReference>
<dbReference type="Gene3D" id="1.10.1200.10">
    <property type="entry name" value="ACP-like"/>
    <property type="match status" value="2"/>
</dbReference>
<dbReference type="Gene3D" id="3.40.366.10">
    <property type="entry name" value="Malonyl-Coenzyme A Acyl Carrier Protein, domain 2"/>
    <property type="match status" value="2"/>
</dbReference>
<dbReference type="Gene3D" id="3.10.129.110">
    <property type="entry name" value="Polyketide synthase dehydratase"/>
    <property type="match status" value="1"/>
</dbReference>
<dbReference type="Gene3D" id="3.40.50.150">
    <property type="entry name" value="Vaccinia Virus protein VP39"/>
    <property type="match status" value="1"/>
</dbReference>
<dbReference type="InterPro" id="IPR001227">
    <property type="entry name" value="Ac_transferase_dom_sf"/>
</dbReference>
<dbReference type="InterPro" id="IPR036736">
    <property type="entry name" value="ACP-like_sf"/>
</dbReference>
<dbReference type="InterPro" id="IPR014043">
    <property type="entry name" value="Acyl_transferase_dom"/>
</dbReference>
<dbReference type="InterPro" id="IPR016035">
    <property type="entry name" value="Acyl_Trfase/lysoPLipase"/>
</dbReference>
<dbReference type="InterPro" id="IPR018201">
    <property type="entry name" value="Ketoacyl_synth_AS"/>
</dbReference>
<dbReference type="InterPro" id="IPR014031">
    <property type="entry name" value="Ketoacyl_synth_C"/>
</dbReference>
<dbReference type="InterPro" id="IPR014030">
    <property type="entry name" value="Ketoacyl_synth_N"/>
</dbReference>
<dbReference type="InterPro" id="IPR016036">
    <property type="entry name" value="Malonyl_transacylase_ACP-bd"/>
</dbReference>
<dbReference type="InterPro" id="IPR013217">
    <property type="entry name" value="Methyltransf_12"/>
</dbReference>
<dbReference type="InterPro" id="IPR020841">
    <property type="entry name" value="PKS_Beta-ketoAc_synthase_dom"/>
</dbReference>
<dbReference type="InterPro" id="IPR042104">
    <property type="entry name" value="PKS_dehydratase_sf"/>
</dbReference>
<dbReference type="InterPro" id="IPR049900">
    <property type="entry name" value="PKS_mFAS_DH"/>
</dbReference>
<dbReference type="InterPro" id="IPR050091">
    <property type="entry name" value="PKS_NRPS_Biosynth_Enz"/>
</dbReference>
<dbReference type="InterPro" id="IPR009081">
    <property type="entry name" value="PP-bd_ACP"/>
</dbReference>
<dbReference type="InterPro" id="IPR029063">
    <property type="entry name" value="SAM-dependent_MTases_sf"/>
</dbReference>
<dbReference type="InterPro" id="IPR032088">
    <property type="entry name" value="SAT"/>
</dbReference>
<dbReference type="InterPro" id="IPR016039">
    <property type="entry name" value="Thiolase-like"/>
</dbReference>
<dbReference type="PANTHER" id="PTHR43775">
    <property type="entry name" value="FATTY ACID SYNTHASE"/>
    <property type="match status" value="1"/>
</dbReference>
<dbReference type="PANTHER" id="PTHR43775:SF21">
    <property type="entry name" value="NON-REDUCING POLYKETIDE SYNTHASE AUSA-RELATED"/>
    <property type="match status" value="1"/>
</dbReference>
<dbReference type="Pfam" id="PF00698">
    <property type="entry name" value="Acyl_transf_1"/>
    <property type="match status" value="1"/>
</dbReference>
<dbReference type="Pfam" id="PF18558">
    <property type="entry name" value="HTH_51"/>
    <property type="match status" value="1"/>
</dbReference>
<dbReference type="Pfam" id="PF00109">
    <property type="entry name" value="ketoacyl-synt"/>
    <property type="match status" value="1"/>
</dbReference>
<dbReference type="Pfam" id="PF02801">
    <property type="entry name" value="Ketoacyl-synt_C"/>
    <property type="match status" value="1"/>
</dbReference>
<dbReference type="Pfam" id="PF08242">
    <property type="entry name" value="Methyltransf_12"/>
    <property type="match status" value="1"/>
</dbReference>
<dbReference type="Pfam" id="PF00550">
    <property type="entry name" value="PP-binding"/>
    <property type="match status" value="2"/>
</dbReference>
<dbReference type="Pfam" id="PF16073">
    <property type="entry name" value="SAT"/>
    <property type="match status" value="1"/>
</dbReference>
<dbReference type="SMART" id="SM00827">
    <property type="entry name" value="PKS_AT"/>
    <property type="match status" value="1"/>
</dbReference>
<dbReference type="SMART" id="SM00825">
    <property type="entry name" value="PKS_KS"/>
    <property type="match status" value="1"/>
</dbReference>
<dbReference type="SUPFAM" id="SSF47336">
    <property type="entry name" value="ACP-like"/>
    <property type="match status" value="2"/>
</dbReference>
<dbReference type="SUPFAM" id="SSF52151">
    <property type="entry name" value="FabD/lysophospholipase-like"/>
    <property type="match status" value="1"/>
</dbReference>
<dbReference type="SUPFAM" id="SSF55048">
    <property type="entry name" value="Probable ACP-binding domain of malonyl-CoA ACP transacylase"/>
    <property type="match status" value="1"/>
</dbReference>
<dbReference type="SUPFAM" id="SSF53335">
    <property type="entry name" value="S-adenosyl-L-methionine-dependent methyltransferases"/>
    <property type="match status" value="1"/>
</dbReference>
<dbReference type="SUPFAM" id="SSF53901">
    <property type="entry name" value="Thiolase-like"/>
    <property type="match status" value="1"/>
</dbReference>
<dbReference type="PROSITE" id="PS50075">
    <property type="entry name" value="CARRIER"/>
    <property type="match status" value="1"/>
</dbReference>
<dbReference type="PROSITE" id="PS00606">
    <property type="entry name" value="KS3_1"/>
    <property type="match status" value="1"/>
</dbReference>
<dbReference type="PROSITE" id="PS52004">
    <property type="entry name" value="KS3_2"/>
    <property type="match status" value="1"/>
</dbReference>
<dbReference type="PROSITE" id="PS52019">
    <property type="entry name" value="PKS_MFAS_DH"/>
    <property type="match status" value="1"/>
</dbReference>
<sequence>MPLPLPSAIVCGPQTNLPSQRNLDWLRSYLTQRPDVEHLLQAVLELPDLLSALQEHDHDLRLIPASSLKDLREWCLDHSIILQIPETLPNVLLAPLTVLIHIIQYLEYCDHLSSEDVHARVRQSIRNGGFQGLCTGSLSAAALACSTTRPEIGQNAAVALKLAMCVGAYVDLGLALEADSPMTCFIARWRHGSQREDVDQILNNFPQAYISVNMDECSATITASKASIPALRDSLRSKSIQFAKVQVNGRYHTASNTKFLENLLKFCRYQSNLRFPPTDYQNIPWRNNTTGKVVGRADQRHEICLRSILTEPASWYLTMSETVKTIVSATPDDCLIPILELGLISCVPSSLSSLPSVHVSRVVVPDEAQNIPELCDYNYTDECVAIVGAACKYPGAESLDELWRVISTAQTMNGQAPPQRYDPTDLRQGPSQSMDLSGNFISGVDQFDYSFFGISPREAMYMDPQQRIALQVAYRAVESSGYFGYGAQTTDFGCYLGVGGSDYEHNVNAHSPTAFSFIGTSRAFISGRISHFFRWTGPSMTIDTACSSSAVAIHQACRDILSGDCEMALAGGINVMSNSTTHQNLATANFLNATGTPCRSFDSGGNGYCRGEGCGLVVLKKLTAAVADGDHILGVIPATATNQSDGSSSITVPVSKQQISLYRRALSRAKMIPEDISYIEAHGTGTPRGDPIEWRSIHEVFGQARESSLNIGSVKGNIGHTEAASGVAGVLKVLLMIKYKQLPPQAHFTSLNHDIPSAQQKHVTVNKRSLQWNRRLRAACVNNYGASGNNTVIIVCEPPKAETTKTLIRDERGKQAGTSHPFWISGHSLGSLQRNIAVISKFVDMCHPTLDDVAFNVARMQNRSLRHRVVFGASSLEELQHRLKDPSHLSLDTHTTEDGPKPVVMVFSGQSGMTVHLHKAVYDASCLIRKHVDQCDTILRSIGLPSLFPGIFSQNPISDIVQLHCAIFTIQYACAAAWLDSGLSVQRVLGHSFGQLTAMCVAGIITPSDGLKLVSGRAKLIESKWGSEKGAMLSIKADRATAIALAQSEAKLGVEIACFNGPTSHVLVGSNAAIETVASKVSKSTVRKLNTSHGFHSRYIDSFLDEYLELAQSISYSTPTIPIETCSEISSWESFTPALVAEHSRKPVYFVDAVRRIKENLGSCVWLEAGSGSSGVTLAKSALNGSDSDSFHGLQLGTADALESLTETTLRLWKDRVSVQFWKHHRGENSLFKPLSIPGYQFDETSHWLPRAERVRSEPLSKKLPPMLSLENFSSPERHLSVFTIDQLSPEIAEILQARKVLDELLWPLSLYIELVSRAAALLTPALPREFQRLRVENFEIKSPLGSRVDARLELRLKLTEQRTWEWSLEGQTSAQTLPYATGRVVLEDRRRSGTEIQRSYLSILESRHCRGLLDDDTVFSASGSIAYKLLEKVAEYDLPYQAIASIKMNEQEALAQVSVPQAAGEWVKRKSVHPVLLDQFTLVAELHALSMIKCKRSEVFTCSEVRETVVYEELSPVSTASWTVYTCQSSLHGRVATYDIYVFDPASKTIIFSVLGAKFVKISSHILQEIVHRANSTPDLSENIFQIKAASPAMQTIQAADPLPTLATTLHSLPHVWSVAAQLVHELTGYAVERITAETMLCNVGMDSLATTELEHKIREILEVDINVQSFGKNVTFGSLVDIVSSQGSSRQAENIGSSVCSTPFTSSAGRSSPISEVDSCRILSDSMIKLCKIVEEYLGSTESVQPGMQLRSLGLDSLVTMELESELYKTFGQQLSLMQLGEEVTINELHDLMQSHPATVADERTESKQSIAREASQSPHFVDEAADRFAQAQDKIGEYAEAAQFLGFFDRVYPQQMSLVLAYVTEAFAALGCDLSEISPGSLIPCIPHIAKHDNVVAYYHNLLHQVGFIIPSDNGFIRTSEPCKRVDPGPLHLDIVHSFPYHGSEHKLLRRTGAQLADCLTGKADALRLLFSDKTTGELLQDVYTNAPMFKMGTLILGHFLPQALESFAATCKEPVRILELGAGTGGTTRYILDQLVTRGIPIRYTFTDISSTLVSRARDTFRAYDCVEYMTLNVEQINPEVAGSYDVILSSNCIHATKDLRHSCQGLYDLLRPKGMLCLLELTRDVPWLDLTFGLLDGWWRFDDGREHVLASEQMWKRLLQEAGFTHVDWSNDESRESDVFRLIMALKK</sequence>
<proteinExistence type="evidence at protein level"/>
<gene>
    <name evidence="7" type="primary">esdpA</name>
</gene>